<comment type="function">
    <text evidence="1">Catalyzes the phospholipid dependent N-acylation of the N-terminal cysteine of apolipoprotein, the last step in lipoprotein maturation.</text>
</comment>
<comment type="catalytic activity">
    <reaction evidence="1">
        <text>N-terminal S-1,2-diacyl-sn-glyceryl-L-cysteinyl-[lipoprotein] + a glycerophospholipid = N-acyl-S-1,2-diacyl-sn-glyceryl-L-cysteinyl-[lipoprotein] + a 2-acyl-sn-glycero-3-phospholipid + H(+)</text>
        <dbReference type="Rhea" id="RHEA:48228"/>
        <dbReference type="Rhea" id="RHEA-COMP:14681"/>
        <dbReference type="Rhea" id="RHEA-COMP:14684"/>
        <dbReference type="ChEBI" id="CHEBI:15378"/>
        <dbReference type="ChEBI" id="CHEBI:136912"/>
        <dbReference type="ChEBI" id="CHEBI:140656"/>
        <dbReference type="ChEBI" id="CHEBI:140657"/>
        <dbReference type="ChEBI" id="CHEBI:140660"/>
        <dbReference type="EC" id="2.3.1.269"/>
    </reaction>
</comment>
<comment type="pathway">
    <text evidence="1">Protein modification; lipoprotein biosynthesis (N-acyl transfer).</text>
</comment>
<comment type="subcellular location">
    <subcellularLocation>
        <location evidence="1">Cell inner membrane</location>
        <topology evidence="1">Multi-pass membrane protein</topology>
    </subcellularLocation>
</comment>
<comment type="similarity">
    <text evidence="1">Belongs to the CN hydrolase family. Apolipoprotein N-acyltransferase subfamily.</text>
</comment>
<accession>O24982</accession>
<reference key="1">
    <citation type="journal article" date="1997" name="Nature">
        <title>The complete genome sequence of the gastric pathogen Helicobacter pylori.</title>
        <authorList>
            <person name="Tomb J.-F."/>
            <person name="White O."/>
            <person name="Kerlavage A.R."/>
            <person name="Clayton R.A."/>
            <person name="Sutton G.G."/>
            <person name="Fleischmann R.D."/>
            <person name="Ketchum K.A."/>
            <person name="Klenk H.-P."/>
            <person name="Gill S.R."/>
            <person name="Dougherty B.A."/>
            <person name="Nelson K.E."/>
            <person name="Quackenbush J."/>
            <person name="Zhou L."/>
            <person name="Kirkness E.F."/>
            <person name="Peterson S.N."/>
            <person name="Loftus B.J."/>
            <person name="Richardson D.L."/>
            <person name="Dodson R.J."/>
            <person name="Khalak H.G."/>
            <person name="Glodek A."/>
            <person name="McKenney K."/>
            <person name="FitzGerald L.M."/>
            <person name="Lee N."/>
            <person name="Adams M.D."/>
            <person name="Hickey E.K."/>
            <person name="Berg D.E."/>
            <person name="Gocayne J.D."/>
            <person name="Utterback T.R."/>
            <person name="Peterson J.D."/>
            <person name="Kelley J.M."/>
            <person name="Cotton M.D."/>
            <person name="Weidman J.F."/>
            <person name="Fujii C."/>
            <person name="Bowman C."/>
            <person name="Watthey L."/>
            <person name="Wallin E."/>
            <person name="Hayes W.S."/>
            <person name="Borodovsky M."/>
            <person name="Karp P.D."/>
            <person name="Smith H.O."/>
            <person name="Fraser C.M."/>
            <person name="Venter J.C."/>
        </authorList>
    </citation>
    <scope>NUCLEOTIDE SEQUENCE [LARGE SCALE GENOMIC DNA]</scope>
    <source>
        <strain>ATCC 700392 / 26695</strain>
    </source>
</reference>
<protein>
    <recommendedName>
        <fullName evidence="1">Apolipoprotein N-acyltransferase</fullName>
        <shortName evidence="1">ALP N-acyltransferase</shortName>
        <ecNumber evidence="1">2.3.1.269</ecNumber>
    </recommendedName>
</protein>
<feature type="chain" id="PRO_0000178071" description="Apolipoprotein N-acyltransferase">
    <location>
        <begin position="1"/>
        <end position="425"/>
    </location>
</feature>
<feature type="transmembrane region" description="Helical" evidence="1">
    <location>
        <begin position="12"/>
        <end position="32"/>
    </location>
</feature>
<feature type="transmembrane region" description="Helical" evidence="1">
    <location>
        <begin position="34"/>
        <end position="54"/>
    </location>
</feature>
<feature type="transmembrane region" description="Helical" evidence="1">
    <location>
        <begin position="60"/>
        <end position="80"/>
    </location>
</feature>
<feature type="transmembrane region" description="Helical" evidence="1">
    <location>
        <begin position="88"/>
        <end position="108"/>
    </location>
</feature>
<feature type="transmembrane region" description="Helical" evidence="1">
    <location>
        <begin position="120"/>
        <end position="140"/>
    </location>
</feature>
<feature type="transmembrane region" description="Helical" evidence="1">
    <location>
        <begin position="142"/>
        <end position="162"/>
    </location>
</feature>
<feature type="domain" description="CN hydrolase" evidence="1">
    <location>
        <begin position="201"/>
        <end position="425"/>
    </location>
</feature>
<feature type="active site" description="Proton acceptor" evidence="1">
    <location>
        <position position="242"/>
    </location>
</feature>
<feature type="active site" evidence="1">
    <location>
        <position position="296"/>
    </location>
</feature>
<feature type="active site" description="Nucleophile" evidence="1">
    <location>
        <position position="349"/>
    </location>
</feature>
<organism>
    <name type="scientific">Helicobacter pylori (strain ATCC 700392 / 26695)</name>
    <name type="common">Campylobacter pylori</name>
    <dbReference type="NCBI Taxonomy" id="85962"/>
    <lineage>
        <taxon>Bacteria</taxon>
        <taxon>Pseudomonadati</taxon>
        <taxon>Campylobacterota</taxon>
        <taxon>Epsilonproteobacteria</taxon>
        <taxon>Campylobacterales</taxon>
        <taxon>Helicobacteraceae</taxon>
        <taxon>Helicobacter</taxon>
    </lineage>
</organism>
<name>LNT_HELPY</name>
<proteinExistence type="inferred from homology"/>
<dbReference type="EC" id="2.3.1.269" evidence="1"/>
<dbReference type="EMBL" id="AE000511">
    <property type="protein sequence ID" value="AAD07250.1"/>
    <property type="molecule type" value="Genomic_DNA"/>
</dbReference>
<dbReference type="PIR" id="D64542">
    <property type="entry name" value="D64542"/>
</dbReference>
<dbReference type="RefSeq" id="NP_206979.1">
    <property type="nucleotide sequence ID" value="NC_000915.1"/>
</dbReference>
<dbReference type="RefSeq" id="WP_001237964.1">
    <property type="nucleotide sequence ID" value="NC_018939.1"/>
</dbReference>
<dbReference type="SMR" id="O24982"/>
<dbReference type="FunCoup" id="O24982">
    <property type="interactions" value="195"/>
</dbReference>
<dbReference type="STRING" id="85962.HP_0180"/>
<dbReference type="PaxDb" id="85962-C694_00895"/>
<dbReference type="EnsemblBacteria" id="AAD07250">
    <property type="protein sequence ID" value="AAD07250"/>
    <property type="gene ID" value="HP_0180"/>
</dbReference>
<dbReference type="KEGG" id="heo:C694_00895"/>
<dbReference type="KEGG" id="hpy:HP_0180"/>
<dbReference type="PATRIC" id="fig|85962.47.peg.195"/>
<dbReference type="eggNOG" id="COG0815">
    <property type="taxonomic scope" value="Bacteria"/>
</dbReference>
<dbReference type="InParanoid" id="O24982"/>
<dbReference type="OrthoDB" id="9804277at2"/>
<dbReference type="PhylomeDB" id="O24982"/>
<dbReference type="UniPathway" id="UPA00666"/>
<dbReference type="Proteomes" id="UP000000429">
    <property type="component" value="Chromosome"/>
</dbReference>
<dbReference type="GO" id="GO:0005886">
    <property type="term" value="C:plasma membrane"/>
    <property type="evidence" value="ECO:0007669"/>
    <property type="project" value="UniProtKB-SubCell"/>
</dbReference>
<dbReference type="GO" id="GO:0016410">
    <property type="term" value="F:N-acyltransferase activity"/>
    <property type="evidence" value="ECO:0007669"/>
    <property type="project" value="UniProtKB-UniRule"/>
</dbReference>
<dbReference type="GO" id="GO:0042158">
    <property type="term" value="P:lipoprotein biosynthetic process"/>
    <property type="evidence" value="ECO:0007669"/>
    <property type="project" value="UniProtKB-UniRule"/>
</dbReference>
<dbReference type="Gene3D" id="3.60.110.10">
    <property type="entry name" value="Carbon-nitrogen hydrolase"/>
    <property type="match status" value="1"/>
</dbReference>
<dbReference type="HAMAP" id="MF_01148">
    <property type="entry name" value="Lnt"/>
    <property type="match status" value="1"/>
</dbReference>
<dbReference type="InterPro" id="IPR004563">
    <property type="entry name" value="Apolipo_AcylTrfase"/>
</dbReference>
<dbReference type="InterPro" id="IPR003010">
    <property type="entry name" value="C-N_Hydrolase"/>
</dbReference>
<dbReference type="InterPro" id="IPR036526">
    <property type="entry name" value="C-N_Hydrolase_sf"/>
</dbReference>
<dbReference type="NCBIfam" id="TIGR00546">
    <property type="entry name" value="lnt"/>
    <property type="match status" value="1"/>
</dbReference>
<dbReference type="NCBIfam" id="NF008934">
    <property type="entry name" value="PRK12291.1"/>
    <property type="match status" value="1"/>
</dbReference>
<dbReference type="PANTHER" id="PTHR38686">
    <property type="entry name" value="APOLIPOPROTEIN N-ACYLTRANSFERASE"/>
    <property type="match status" value="1"/>
</dbReference>
<dbReference type="PANTHER" id="PTHR38686:SF1">
    <property type="entry name" value="APOLIPOPROTEIN N-ACYLTRANSFERASE"/>
    <property type="match status" value="1"/>
</dbReference>
<dbReference type="Pfam" id="PF00795">
    <property type="entry name" value="CN_hydrolase"/>
    <property type="match status" value="1"/>
</dbReference>
<dbReference type="SUPFAM" id="SSF56317">
    <property type="entry name" value="Carbon-nitrogen hydrolase"/>
    <property type="match status" value="1"/>
</dbReference>
<dbReference type="PROSITE" id="PS50263">
    <property type="entry name" value="CN_HYDROLASE"/>
    <property type="match status" value="1"/>
</dbReference>
<sequence>MRLLLFNQNAFLLACMFVSSVYVNAVLDAYAIENPYISITLTSLLAPLSMLAFLKTPRNSAFALGFFVGALLFYWCALSFRYSDFTYLLPLIIVLIALVYGVLFYLLLYFENPYFRLLSFLGSSFIHPFGFDWLVPDSFFSYSVFRVDKLSLGLVFLACIFLSTKPLKKYRIIGVLLLLGALDFNGFKTSDLKKVGNIELVSTKTPQDLKFDSSYLNDIENNILKEIKLAQSKQKTLIVFPETAYPIALENSPFKAKLEDLSDNIAILIGTLRTQGYNLYNSSFLFSKESVQIADKVILAPFGETMPLPEFLQKPLEKLFFGESTYLYRNAPHFSDFTLDDFTFRPLICYEGTSKPAYSNSPSKIFIVMSNNAWFSPSIEPTLQRTLLKYYARRYDKIILHSANFSTSYILSPSLLGDILFRKRS</sequence>
<evidence type="ECO:0000255" key="1">
    <source>
        <dbReference type="HAMAP-Rule" id="MF_01148"/>
    </source>
</evidence>
<gene>
    <name evidence="1" type="primary">lnt</name>
    <name type="ordered locus">HP_0180</name>
</gene>
<keyword id="KW-0012">Acyltransferase</keyword>
<keyword id="KW-0997">Cell inner membrane</keyword>
<keyword id="KW-1003">Cell membrane</keyword>
<keyword id="KW-0472">Membrane</keyword>
<keyword id="KW-1185">Reference proteome</keyword>
<keyword id="KW-0808">Transferase</keyword>
<keyword id="KW-0812">Transmembrane</keyword>
<keyword id="KW-1133">Transmembrane helix</keyword>